<dbReference type="EC" id="2.1.1.-"/>
<dbReference type="EMBL" id="CT573213">
    <property type="protein sequence ID" value="CAJ64034.1"/>
    <property type="molecule type" value="Genomic_DNA"/>
</dbReference>
<dbReference type="RefSeq" id="WP_011606484.1">
    <property type="nucleotide sequence ID" value="NC_008278.1"/>
</dbReference>
<dbReference type="SMR" id="Q0RES2"/>
<dbReference type="STRING" id="326424.FRAAL5401"/>
<dbReference type="KEGG" id="fal:FRAAL5401"/>
<dbReference type="eggNOG" id="COG3315">
    <property type="taxonomic scope" value="Bacteria"/>
</dbReference>
<dbReference type="HOGENOM" id="CLU_056160_2_1_11"/>
<dbReference type="OrthoDB" id="9806164at2"/>
<dbReference type="Proteomes" id="UP000000657">
    <property type="component" value="Chromosome"/>
</dbReference>
<dbReference type="GO" id="GO:0008168">
    <property type="term" value="F:methyltransferase activity"/>
    <property type="evidence" value="ECO:0007669"/>
    <property type="project" value="UniProtKB-KW"/>
</dbReference>
<dbReference type="GO" id="GO:0032259">
    <property type="term" value="P:methylation"/>
    <property type="evidence" value="ECO:0007669"/>
    <property type="project" value="UniProtKB-KW"/>
</dbReference>
<dbReference type="Gene3D" id="3.40.50.150">
    <property type="entry name" value="Vaccinia Virus protein VP39"/>
    <property type="match status" value="1"/>
</dbReference>
<dbReference type="InterPro" id="IPR007213">
    <property type="entry name" value="Ppm1/Ppm2/Tcmp"/>
</dbReference>
<dbReference type="InterPro" id="IPR029063">
    <property type="entry name" value="SAM-dependent_MTases_sf"/>
</dbReference>
<dbReference type="InterPro" id="IPR011610">
    <property type="entry name" value="SAM_mthyl_Trfase_ML2640-like"/>
</dbReference>
<dbReference type="NCBIfam" id="TIGR00027">
    <property type="entry name" value="mthyl_TIGR00027"/>
    <property type="match status" value="1"/>
</dbReference>
<dbReference type="PANTHER" id="PTHR43619">
    <property type="entry name" value="S-ADENOSYL-L-METHIONINE-DEPENDENT METHYLTRANSFERASE YKTD-RELATED"/>
    <property type="match status" value="1"/>
</dbReference>
<dbReference type="PANTHER" id="PTHR43619:SF2">
    <property type="entry name" value="S-ADENOSYL-L-METHIONINE-DEPENDENT METHYLTRANSFERASES SUPERFAMILY PROTEIN"/>
    <property type="match status" value="1"/>
</dbReference>
<dbReference type="Pfam" id="PF04072">
    <property type="entry name" value="LCM"/>
    <property type="match status" value="1"/>
</dbReference>
<dbReference type="SUPFAM" id="SSF53335">
    <property type="entry name" value="S-adenosyl-L-methionine-dependent methyltransferases"/>
    <property type="match status" value="1"/>
</dbReference>
<organism>
    <name type="scientific">Frankia alni (strain DSM 45986 / CECT 9034 / ACN14a)</name>
    <dbReference type="NCBI Taxonomy" id="326424"/>
    <lineage>
        <taxon>Bacteria</taxon>
        <taxon>Bacillati</taxon>
        <taxon>Actinomycetota</taxon>
        <taxon>Actinomycetes</taxon>
        <taxon>Frankiales</taxon>
        <taxon>Frankiaceae</taxon>
        <taxon>Frankia</taxon>
    </lineage>
</organism>
<evidence type="ECO:0000250" key="1"/>
<evidence type="ECO:0000256" key="2">
    <source>
        <dbReference type="SAM" id="MobiDB-lite"/>
    </source>
</evidence>
<evidence type="ECO:0000305" key="3"/>
<name>Y5401_FRAAA</name>
<gene>
    <name type="ordered locus">FRAAL5401</name>
</gene>
<sequence length="306" mass="33630">MTSTRHDGDTWDLASSVGATATMAAVARAIATRADRRLIDDPFAAPLVRAVGIDLLTRLATGDVPPDGLVEQVAIDVAKVRARFYDEFFLEATNTGITQVVILASGLDSRAYRLPWPIGTVVYELDQPRVVEFKTRTLAALGAVPTADRRVAAVDLRDDWPAALRAAGFDPARPTAWSAEGLLGYLPPEAQDRLLDTVTELSAPESRVATENRPNPKPGDEDRTKEALNRISERWRAHSFDPDMARLRYYGERNETAPYLADRGWALTGISVRDLLAAHGLPPLRDDDLRMGDVRYVSGVRNKTTK</sequence>
<protein>
    <recommendedName>
        <fullName>Putative S-adenosyl-L-methionine-dependent methyltransferase FRAAL5401</fullName>
        <ecNumber>2.1.1.-</ecNumber>
    </recommendedName>
</protein>
<feature type="chain" id="PRO_0000361098" description="Putative S-adenosyl-L-methionine-dependent methyltransferase FRAAL5401">
    <location>
        <begin position="1"/>
        <end position="306"/>
    </location>
</feature>
<feature type="region of interest" description="Disordered" evidence="2">
    <location>
        <begin position="201"/>
        <end position="225"/>
    </location>
</feature>
<feature type="binding site" evidence="1">
    <location>
        <position position="126"/>
    </location>
    <ligand>
        <name>S-adenosyl-L-methionine</name>
        <dbReference type="ChEBI" id="CHEBI:59789"/>
    </ligand>
</feature>
<feature type="binding site" evidence="1">
    <location>
        <begin position="155"/>
        <end position="156"/>
    </location>
    <ligand>
        <name>S-adenosyl-L-methionine</name>
        <dbReference type="ChEBI" id="CHEBI:59789"/>
    </ligand>
</feature>
<comment type="function">
    <text evidence="1">Exhibits S-adenosyl-L-methionine-dependent methyltransferase activity.</text>
</comment>
<comment type="similarity">
    <text evidence="3">Belongs to the UPF0677 family.</text>
</comment>
<proteinExistence type="inferred from homology"/>
<accession>Q0RES2</accession>
<keyword id="KW-0489">Methyltransferase</keyword>
<keyword id="KW-1185">Reference proteome</keyword>
<keyword id="KW-0949">S-adenosyl-L-methionine</keyword>
<keyword id="KW-0808">Transferase</keyword>
<reference key="1">
    <citation type="journal article" date="2007" name="Genome Res.">
        <title>Genome characteristics of facultatively symbiotic Frankia sp. strains reflect host range and host plant biogeography.</title>
        <authorList>
            <person name="Normand P."/>
            <person name="Lapierre P."/>
            <person name="Tisa L.S."/>
            <person name="Gogarten J.P."/>
            <person name="Alloisio N."/>
            <person name="Bagnarol E."/>
            <person name="Bassi C.A."/>
            <person name="Berry A.M."/>
            <person name="Bickhart D.M."/>
            <person name="Choisne N."/>
            <person name="Couloux A."/>
            <person name="Cournoyer B."/>
            <person name="Cruveiller S."/>
            <person name="Daubin V."/>
            <person name="Demange N."/>
            <person name="Francino M.P."/>
            <person name="Goltsman E."/>
            <person name="Huang Y."/>
            <person name="Kopp O.R."/>
            <person name="Labarre L."/>
            <person name="Lapidus A."/>
            <person name="Lavire C."/>
            <person name="Marechal J."/>
            <person name="Martinez M."/>
            <person name="Mastronunzio J.E."/>
            <person name="Mullin B.C."/>
            <person name="Niemann J."/>
            <person name="Pujic P."/>
            <person name="Rawnsley T."/>
            <person name="Rouy Z."/>
            <person name="Schenowitz C."/>
            <person name="Sellstedt A."/>
            <person name="Tavares F."/>
            <person name="Tomkins J.P."/>
            <person name="Vallenet D."/>
            <person name="Valverde C."/>
            <person name="Wall L.G."/>
            <person name="Wang Y."/>
            <person name="Medigue C."/>
            <person name="Benson D.R."/>
        </authorList>
    </citation>
    <scope>NUCLEOTIDE SEQUENCE [LARGE SCALE GENOMIC DNA]</scope>
    <source>
        <strain>DSM 45986 / CECT 9034 / ACN14a</strain>
    </source>
</reference>